<dbReference type="EC" id="3.1.1.89"/>
<dbReference type="EMBL" id="AACD01000006">
    <property type="protein sequence ID" value="EAA65699.1"/>
    <property type="status" value="ALT_SEQ"/>
    <property type="molecule type" value="Genomic_DNA"/>
</dbReference>
<dbReference type="EMBL" id="BN001308">
    <property type="protein sequence ID" value="CBF89786.1"/>
    <property type="molecule type" value="Genomic_DNA"/>
</dbReference>
<dbReference type="RefSeq" id="XP_657897.1">
    <property type="nucleotide sequence ID" value="XM_652805.1"/>
</dbReference>
<dbReference type="SMR" id="Q5BGN7"/>
<dbReference type="FunCoup" id="Q5BGN7">
    <property type="interactions" value="819"/>
</dbReference>
<dbReference type="STRING" id="227321.Q5BGN7"/>
<dbReference type="ESTHER" id="emeni-ppme1">
    <property type="family name" value="PPase_methylesterase_euk"/>
</dbReference>
<dbReference type="EnsemblFungi" id="CBF89786">
    <property type="protein sequence ID" value="CBF89786"/>
    <property type="gene ID" value="ANIA_00293"/>
</dbReference>
<dbReference type="VEuPathDB" id="FungiDB:AN0293"/>
<dbReference type="eggNOG" id="KOG2564">
    <property type="taxonomic scope" value="Eukaryota"/>
</dbReference>
<dbReference type="HOGENOM" id="CLU_024818_3_0_1"/>
<dbReference type="InParanoid" id="Q5BGN7"/>
<dbReference type="OMA" id="VMVCHHG"/>
<dbReference type="OrthoDB" id="194865at2759"/>
<dbReference type="Proteomes" id="UP000000560">
    <property type="component" value="Chromosome VIII"/>
</dbReference>
<dbReference type="GO" id="GO:0051722">
    <property type="term" value="F:protein C-terminal methylesterase activity"/>
    <property type="evidence" value="ECO:0000318"/>
    <property type="project" value="GO_Central"/>
</dbReference>
<dbReference type="FunFam" id="3.40.50.1820:FF:000186">
    <property type="entry name" value="Protein phosphatase methylesterase 1"/>
    <property type="match status" value="1"/>
</dbReference>
<dbReference type="Gene3D" id="3.40.50.1820">
    <property type="entry name" value="alpha/beta hydrolase"/>
    <property type="match status" value="1"/>
</dbReference>
<dbReference type="InterPro" id="IPR000073">
    <property type="entry name" value="AB_hydrolase_1"/>
</dbReference>
<dbReference type="InterPro" id="IPR029058">
    <property type="entry name" value="AB_hydrolase_fold"/>
</dbReference>
<dbReference type="InterPro" id="IPR016812">
    <property type="entry name" value="PPase_methylesterase_euk"/>
</dbReference>
<dbReference type="PANTHER" id="PTHR14189:SF0">
    <property type="entry name" value="PROTEIN PHOSPHATASE METHYLESTERASE 1"/>
    <property type="match status" value="1"/>
</dbReference>
<dbReference type="PANTHER" id="PTHR14189">
    <property type="entry name" value="PROTEIN PHOSPHATASE METHYLESTERASE-1 RELATED"/>
    <property type="match status" value="1"/>
</dbReference>
<dbReference type="Pfam" id="PF12697">
    <property type="entry name" value="Abhydrolase_6"/>
    <property type="match status" value="1"/>
</dbReference>
<dbReference type="PIRSF" id="PIRSF022950">
    <property type="entry name" value="PPase_methylesterase_euk"/>
    <property type="match status" value="1"/>
</dbReference>
<dbReference type="SUPFAM" id="SSF53474">
    <property type="entry name" value="alpha/beta-Hydrolases"/>
    <property type="match status" value="1"/>
</dbReference>
<proteinExistence type="inferred from homology"/>
<protein>
    <recommendedName>
        <fullName>Protein phosphatase methylesterase 1</fullName>
        <shortName>PME-1</shortName>
        <ecNumber>3.1.1.89</ecNumber>
    </recommendedName>
</protein>
<gene>
    <name type="primary">ppe1</name>
    <name type="ORF">AN0293</name>
</gene>
<feature type="chain" id="PRO_0000223665" description="Protein phosphatase methylesterase 1">
    <location>
        <begin position="1"/>
        <end position="407"/>
    </location>
</feature>
<feature type="region of interest" description="Disordered" evidence="2">
    <location>
        <begin position="1"/>
        <end position="53"/>
    </location>
</feature>
<feature type="region of interest" description="Disordered" evidence="2">
    <location>
        <begin position="388"/>
        <end position="407"/>
    </location>
</feature>
<feature type="compositionally biased region" description="Gly residues" evidence="2">
    <location>
        <begin position="388"/>
        <end position="401"/>
    </location>
</feature>
<feature type="active site" evidence="1">
    <location>
        <position position="185"/>
    </location>
</feature>
<feature type="active site" evidence="1">
    <location>
        <position position="211"/>
    </location>
</feature>
<feature type="active site" evidence="1">
    <location>
        <position position="342"/>
    </location>
</feature>
<sequence length="407" mass="44304">MSDLQKSFAKSKLAKLPPEPPPIPESVADEDDDSGSSTETVTPSPVKQLFARPGGTRGFFDQELYLQRRVNDLDIVHHVYLTSPTNSGPLFVMHHGAGSSGLSFANCAAEIRKILPNAGILSADARDHGSTSVKRASEDGEADPETARLDLSLDTLNQDLLFVIRETQAKMGWETLPDIVLVGHSLGGAVITDVAKKGELGGKLLAYAVLDVVEGSAMDALQSMETYLSTRPSRFPSLPSGIEWHTRSRTIRNRTSARVSVPSLLYHEDVPKDPSKPWVWRTNLAETKPFWEGWFVGLSRKFLEARGGKLLLLAGTDRLDKELMIGQMQGKYQLQVFPDAGHFIQEDQPARTAQILVDFYKRNDRSALVLPPKVADMQASAAMKKGAGAGVPLGKAEGGTTGSFKRS</sequence>
<organism>
    <name type="scientific">Emericella nidulans (strain FGSC A4 / ATCC 38163 / CBS 112.46 / NRRL 194 / M139)</name>
    <name type="common">Aspergillus nidulans</name>
    <dbReference type="NCBI Taxonomy" id="227321"/>
    <lineage>
        <taxon>Eukaryota</taxon>
        <taxon>Fungi</taxon>
        <taxon>Dikarya</taxon>
        <taxon>Ascomycota</taxon>
        <taxon>Pezizomycotina</taxon>
        <taxon>Eurotiomycetes</taxon>
        <taxon>Eurotiomycetidae</taxon>
        <taxon>Eurotiales</taxon>
        <taxon>Aspergillaceae</taxon>
        <taxon>Aspergillus</taxon>
        <taxon>Aspergillus subgen. Nidulantes</taxon>
    </lineage>
</organism>
<reference key="1">
    <citation type="journal article" date="2005" name="Nature">
        <title>Sequencing of Aspergillus nidulans and comparative analysis with A. fumigatus and A. oryzae.</title>
        <authorList>
            <person name="Galagan J.E."/>
            <person name="Calvo S.E."/>
            <person name="Cuomo C."/>
            <person name="Ma L.-J."/>
            <person name="Wortman J.R."/>
            <person name="Batzoglou S."/>
            <person name="Lee S.-I."/>
            <person name="Bastuerkmen M."/>
            <person name="Spevak C.C."/>
            <person name="Clutterbuck J."/>
            <person name="Kapitonov V."/>
            <person name="Jurka J."/>
            <person name="Scazzocchio C."/>
            <person name="Farman M.L."/>
            <person name="Butler J."/>
            <person name="Purcell S."/>
            <person name="Harris S."/>
            <person name="Braus G.H."/>
            <person name="Draht O."/>
            <person name="Busch S."/>
            <person name="D'Enfert C."/>
            <person name="Bouchier C."/>
            <person name="Goldman G.H."/>
            <person name="Bell-Pedersen D."/>
            <person name="Griffiths-Jones S."/>
            <person name="Doonan J.H."/>
            <person name="Yu J."/>
            <person name="Vienken K."/>
            <person name="Pain A."/>
            <person name="Freitag M."/>
            <person name="Selker E.U."/>
            <person name="Archer D.B."/>
            <person name="Penalva M.A."/>
            <person name="Oakley B.R."/>
            <person name="Momany M."/>
            <person name="Tanaka T."/>
            <person name="Kumagai T."/>
            <person name="Asai K."/>
            <person name="Machida M."/>
            <person name="Nierman W.C."/>
            <person name="Denning D.W."/>
            <person name="Caddick M.X."/>
            <person name="Hynes M."/>
            <person name="Paoletti M."/>
            <person name="Fischer R."/>
            <person name="Miller B.L."/>
            <person name="Dyer P.S."/>
            <person name="Sachs M.S."/>
            <person name="Osmani S.A."/>
            <person name="Birren B.W."/>
        </authorList>
    </citation>
    <scope>NUCLEOTIDE SEQUENCE [LARGE SCALE GENOMIC DNA]</scope>
    <source>
        <strain>FGSC A4 / ATCC 38163 / CBS 112.46 / NRRL 194 / M139</strain>
    </source>
</reference>
<reference key="2">
    <citation type="journal article" date="2009" name="Fungal Genet. Biol.">
        <title>The 2008 update of the Aspergillus nidulans genome annotation: a community effort.</title>
        <authorList>
            <person name="Wortman J.R."/>
            <person name="Gilsenan J.M."/>
            <person name="Joardar V."/>
            <person name="Deegan J."/>
            <person name="Clutterbuck J."/>
            <person name="Andersen M.R."/>
            <person name="Archer D."/>
            <person name="Bencina M."/>
            <person name="Braus G."/>
            <person name="Coutinho P."/>
            <person name="von Dohren H."/>
            <person name="Doonan J."/>
            <person name="Driessen A.J."/>
            <person name="Durek P."/>
            <person name="Espeso E."/>
            <person name="Fekete E."/>
            <person name="Flipphi M."/>
            <person name="Estrada C.G."/>
            <person name="Geysens S."/>
            <person name="Goldman G."/>
            <person name="de Groot P.W."/>
            <person name="Hansen K."/>
            <person name="Harris S.D."/>
            <person name="Heinekamp T."/>
            <person name="Helmstaedt K."/>
            <person name="Henrissat B."/>
            <person name="Hofmann G."/>
            <person name="Homan T."/>
            <person name="Horio T."/>
            <person name="Horiuchi H."/>
            <person name="James S."/>
            <person name="Jones M."/>
            <person name="Karaffa L."/>
            <person name="Karanyi Z."/>
            <person name="Kato M."/>
            <person name="Keller N."/>
            <person name="Kelly D.E."/>
            <person name="Kiel J.A."/>
            <person name="Kim J.M."/>
            <person name="van der Klei I.J."/>
            <person name="Klis F.M."/>
            <person name="Kovalchuk A."/>
            <person name="Krasevec N."/>
            <person name="Kubicek C.P."/>
            <person name="Liu B."/>
            <person name="Maccabe A."/>
            <person name="Meyer V."/>
            <person name="Mirabito P."/>
            <person name="Miskei M."/>
            <person name="Mos M."/>
            <person name="Mullins J."/>
            <person name="Nelson D.R."/>
            <person name="Nielsen J."/>
            <person name="Oakley B.R."/>
            <person name="Osmani S.A."/>
            <person name="Pakula T."/>
            <person name="Paszewski A."/>
            <person name="Paulsen I."/>
            <person name="Pilsyk S."/>
            <person name="Pocsi I."/>
            <person name="Punt P.J."/>
            <person name="Ram A.F."/>
            <person name="Ren Q."/>
            <person name="Robellet X."/>
            <person name="Robson G."/>
            <person name="Seiboth B."/>
            <person name="van Solingen P."/>
            <person name="Specht T."/>
            <person name="Sun J."/>
            <person name="Taheri-Talesh N."/>
            <person name="Takeshita N."/>
            <person name="Ussery D."/>
            <person name="vanKuyk P.A."/>
            <person name="Visser H."/>
            <person name="van de Vondervoort P.J."/>
            <person name="de Vries R.P."/>
            <person name="Walton J."/>
            <person name="Xiang X."/>
            <person name="Xiong Y."/>
            <person name="Zeng A.P."/>
            <person name="Brandt B.W."/>
            <person name="Cornell M.J."/>
            <person name="van den Hondel C.A."/>
            <person name="Visser J."/>
            <person name="Oliver S.G."/>
            <person name="Turner G."/>
        </authorList>
    </citation>
    <scope>GENOME REANNOTATION</scope>
    <source>
        <strain>FGSC A4 / ATCC 38163 / CBS 112.46 / NRRL 194 / M139</strain>
    </source>
</reference>
<evidence type="ECO:0000250" key="1"/>
<evidence type="ECO:0000256" key="2">
    <source>
        <dbReference type="SAM" id="MobiDB-lite"/>
    </source>
</evidence>
<evidence type="ECO:0000305" key="3"/>
<accession>Q5BGN7</accession>
<accession>C8VUA3</accession>
<name>PPME1_EMENI</name>
<keyword id="KW-0378">Hydrolase</keyword>
<keyword id="KW-1185">Reference proteome</keyword>
<keyword id="KW-0719">Serine esterase</keyword>
<comment type="function">
    <text evidence="1">Demethylates proteins that have been reversibly carboxymethylated. Demethylates the phosphatase PP2A catalytic subunit (By similarity).</text>
</comment>
<comment type="catalytic activity">
    <reaction>
        <text>[phosphatase 2A protein]-C-terminal L-leucine methyl ester + H2O = [phosphatase 2A protein]-C-terminal L-leucine + methanol + H(+)</text>
        <dbReference type="Rhea" id="RHEA:48548"/>
        <dbReference type="Rhea" id="RHEA-COMP:12134"/>
        <dbReference type="Rhea" id="RHEA-COMP:12135"/>
        <dbReference type="ChEBI" id="CHEBI:15377"/>
        <dbReference type="ChEBI" id="CHEBI:15378"/>
        <dbReference type="ChEBI" id="CHEBI:17790"/>
        <dbReference type="ChEBI" id="CHEBI:90516"/>
        <dbReference type="ChEBI" id="CHEBI:90517"/>
        <dbReference type="EC" id="3.1.1.89"/>
    </reaction>
</comment>
<comment type="similarity">
    <text evidence="3">Belongs to the AB hydrolase superfamily.</text>
</comment>
<comment type="sequence caution" evidence="3">
    <conflict type="erroneous gene model prediction">
        <sequence resource="EMBL-CDS" id="EAA65699"/>
    </conflict>
</comment>